<evidence type="ECO:0000250" key="1"/>
<evidence type="ECO:0000250" key="2">
    <source>
        <dbReference type="UniProtKB" id="P61837"/>
    </source>
</evidence>
<evidence type="ECO:0000250" key="3">
    <source>
        <dbReference type="UniProtKB" id="Q41951"/>
    </source>
</evidence>
<evidence type="ECO:0000255" key="4"/>
<evidence type="ECO:0000269" key="5">
    <source>
    </source>
</evidence>
<evidence type="ECO:0000305" key="6"/>
<name>TIP32_ARATH</name>
<organism>
    <name type="scientific">Arabidopsis thaliana</name>
    <name type="common">Mouse-ear cress</name>
    <dbReference type="NCBI Taxonomy" id="3702"/>
    <lineage>
        <taxon>Eukaryota</taxon>
        <taxon>Viridiplantae</taxon>
        <taxon>Streptophyta</taxon>
        <taxon>Embryophyta</taxon>
        <taxon>Tracheophyta</taxon>
        <taxon>Spermatophyta</taxon>
        <taxon>Magnoliopsida</taxon>
        <taxon>eudicotyledons</taxon>
        <taxon>Gunneridae</taxon>
        <taxon>Pentapetalae</taxon>
        <taxon>rosids</taxon>
        <taxon>malvids</taxon>
        <taxon>Brassicales</taxon>
        <taxon>Brassicaceae</taxon>
        <taxon>Camelineae</taxon>
        <taxon>Arabidopsis</taxon>
    </lineage>
</organism>
<dbReference type="EMBL" id="AF026275">
    <property type="protein sequence ID" value="AAB84183.1"/>
    <property type="molecule type" value="mRNA"/>
</dbReference>
<dbReference type="EMBL" id="AC034106">
    <property type="protein sequence ID" value="AAF97261.1"/>
    <property type="molecule type" value="Genomic_DNA"/>
</dbReference>
<dbReference type="EMBL" id="CP002684">
    <property type="protein sequence ID" value="AEE29639.1"/>
    <property type="molecule type" value="Genomic_DNA"/>
</dbReference>
<dbReference type="EMBL" id="AK229035">
    <property type="protein sequence ID" value="BAF00920.1"/>
    <property type="molecule type" value="mRNA"/>
</dbReference>
<dbReference type="PIR" id="B86313">
    <property type="entry name" value="B86313"/>
</dbReference>
<dbReference type="RefSeq" id="NP_173223.1">
    <molecule id="O22588-1"/>
    <property type="nucleotide sequence ID" value="NM_101644.3"/>
</dbReference>
<dbReference type="SMR" id="O22588"/>
<dbReference type="BioGRID" id="23598">
    <property type="interactions" value="4"/>
</dbReference>
<dbReference type="FunCoup" id="O22588">
    <property type="interactions" value="556"/>
</dbReference>
<dbReference type="IntAct" id="O22588">
    <property type="interactions" value="3"/>
</dbReference>
<dbReference type="STRING" id="3702.O22588"/>
<dbReference type="PaxDb" id="3702-AT1G17810.1"/>
<dbReference type="EnsemblPlants" id="AT1G17810.1">
    <molecule id="O22588-1"/>
    <property type="protein sequence ID" value="AT1G17810.1"/>
    <property type="gene ID" value="AT1G17810"/>
</dbReference>
<dbReference type="GeneID" id="838359"/>
<dbReference type="Gramene" id="AT1G17810.1">
    <molecule id="O22588-1"/>
    <property type="protein sequence ID" value="AT1G17810.1"/>
    <property type="gene ID" value="AT1G17810"/>
</dbReference>
<dbReference type="KEGG" id="ath:AT1G17810"/>
<dbReference type="Araport" id="AT1G17810"/>
<dbReference type="TAIR" id="AT1G17810">
    <property type="gene designation" value="BETA-TIP"/>
</dbReference>
<dbReference type="eggNOG" id="KOG0223">
    <property type="taxonomic scope" value="Eukaryota"/>
</dbReference>
<dbReference type="HOGENOM" id="CLU_020019_3_4_1"/>
<dbReference type="InParanoid" id="O22588"/>
<dbReference type="OMA" id="LALNTMH"/>
<dbReference type="OrthoDB" id="3222at2759"/>
<dbReference type="PhylomeDB" id="O22588"/>
<dbReference type="PRO" id="PR:O22588"/>
<dbReference type="Proteomes" id="UP000006548">
    <property type="component" value="Chromosome 1"/>
</dbReference>
<dbReference type="ExpressionAtlas" id="O22588">
    <property type="expression patterns" value="baseline and differential"/>
</dbReference>
<dbReference type="GO" id="GO:0005774">
    <property type="term" value="C:vacuolar membrane"/>
    <property type="evidence" value="ECO:0007669"/>
    <property type="project" value="UniProtKB-SubCell"/>
</dbReference>
<dbReference type="GO" id="GO:0015267">
    <property type="term" value="F:channel activity"/>
    <property type="evidence" value="ECO:0007669"/>
    <property type="project" value="InterPro"/>
</dbReference>
<dbReference type="CDD" id="cd00333">
    <property type="entry name" value="MIP"/>
    <property type="match status" value="1"/>
</dbReference>
<dbReference type="FunFam" id="1.20.1080.10:FF:000002">
    <property type="entry name" value="Probable aquaporin TIP1-1"/>
    <property type="match status" value="1"/>
</dbReference>
<dbReference type="Gene3D" id="1.20.1080.10">
    <property type="entry name" value="Glycerol uptake facilitator protein"/>
    <property type="match status" value="1"/>
</dbReference>
<dbReference type="InterPro" id="IPR023271">
    <property type="entry name" value="Aquaporin-like"/>
</dbReference>
<dbReference type="InterPro" id="IPR034294">
    <property type="entry name" value="Aquaporin_transptr"/>
</dbReference>
<dbReference type="InterPro" id="IPR000425">
    <property type="entry name" value="MIP"/>
</dbReference>
<dbReference type="InterPro" id="IPR022357">
    <property type="entry name" value="MIP_CS"/>
</dbReference>
<dbReference type="NCBIfam" id="TIGR00861">
    <property type="entry name" value="MIP"/>
    <property type="match status" value="1"/>
</dbReference>
<dbReference type="PANTHER" id="PTHR45665:SF23">
    <property type="entry name" value="AQUAPORIN TIP3-2-RELATED"/>
    <property type="match status" value="1"/>
</dbReference>
<dbReference type="PANTHER" id="PTHR45665">
    <property type="entry name" value="AQUAPORIN-8"/>
    <property type="match status" value="1"/>
</dbReference>
<dbReference type="Pfam" id="PF00230">
    <property type="entry name" value="MIP"/>
    <property type="match status" value="1"/>
</dbReference>
<dbReference type="PRINTS" id="PR00783">
    <property type="entry name" value="MINTRINSICP"/>
</dbReference>
<dbReference type="SUPFAM" id="SSF81338">
    <property type="entry name" value="Aquaporin-like"/>
    <property type="match status" value="1"/>
</dbReference>
<dbReference type="PROSITE" id="PS00221">
    <property type="entry name" value="MIP"/>
    <property type="match status" value="1"/>
</dbReference>
<gene>
    <name type="primary">TIP3-2</name>
    <name type="ordered locus">At1g17810</name>
    <name type="ORF">F2H15.4</name>
</gene>
<proteinExistence type="evidence at transcript level"/>
<keyword id="KW-0007">Acetylation</keyword>
<keyword id="KW-0025">Alternative splicing</keyword>
<keyword id="KW-0472">Membrane</keyword>
<keyword id="KW-1185">Reference proteome</keyword>
<keyword id="KW-0677">Repeat</keyword>
<keyword id="KW-0812">Transmembrane</keyword>
<keyword id="KW-1133">Transmembrane helix</keyword>
<keyword id="KW-0813">Transport</keyword>
<keyword id="KW-0926">Vacuole</keyword>
<accession>O22588</accession>
<accession>Q0WPM9</accession>
<protein>
    <recommendedName>
        <fullName>Probable aquaporin TIP3-2</fullName>
    </recommendedName>
    <alternativeName>
        <fullName>Beta-tonoplast intrinsic protein</fullName>
        <shortName>Beta-TIP</shortName>
    </alternativeName>
    <alternativeName>
        <fullName>Tonoplast intrinsic protein 3-2</fullName>
        <shortName>AtTIP3;2</shortName>
    </alternativeName>
    <component>
        <recommendedName>
            <fullName>Probable aquaporin TIP3-2, N-terminally processed</fullName>
        </recommendedName>
    </component>
</protein>
<reference key="1">
    <citation type="submission" date="1997-09" db="EMBL/GenBank/DDBJ databases">
        <title>Regulation of Arabidopsis Beta-TIP in etiolated seedlings.</title>
        <authorList>
            <person name="Peck S.C."/>
            <person name="Trentmann S.M."/>
            <person name="Kende H."/>
        </authorList>
    </citation>
    <scope>NUCLEOTIDE SEQUENCE [MRNA]</scope>
    <source>
        <strain>cv. Columbia</strain>
    </source>
</reference>
<reference key="2">
    <citation type="journal article" date="2000" name="Nature">
        <title>Sequence and analysis of chromosome 1 of the plant Arabidopsis thaliana.</title>
        <authorList>
            <person name="Theologis A."/>
            <person name="Ecker J.R."/>
            <person name="Palm C.J."/>
            <person name="Federspiel N.A."/>
            <person name="Kaul S."/>
            <person name="White O."/>
            <person name="Alonso J."/>
            <person name="Altafi H."/>
            <person name="Araujo R."/>
            <person name="Bowman C.L."/>
            <person name="Brooks S.Y."/>
            <person name="Buehler E."/>
            <person name="Chan A."/>
            <person name="Chao Q."/>
            <person name="Chen H."/>
            <person name="Cheuk R.F."/>
            <person name="Chin C.W."/>
            <person name="Chung M.K."/>
            <person name="Conn L."/>
            <person name="Conway A.B."/>
            <person name="Conway A.R."/>
            <person name="Creasy T.H."/>
            <person name="Dewar K."/>
            <person name="Dunn P."/>
            <person name="Etgu P."/>
            <person name="Feldblyum T.V."/>
            <person name="Feng J.-D."/>
            <person name="Fong B."/>
            <person name="Fujii C.Y."/>
            <person name="Gill J.E."/>
            <person name="Goldsmith A.D."/>
            <person name="Haas B."/>
            <person name="Hansen N.F."/>
            <person name="Hughes B."/>
            <person name="Huizar L."/>
            <person name="Hunter J.L."/>
            <person name="Jenkins J."/>
            <person name="Johnson-Hopson C."/>
            <person name="Khan S."/>
            <person name="Khaykin E."/>
            <person name="Kim C.J."/>
            <person name="Koo H.L."/>
            <person name="Kremenetskaia I."/>
            <person name="Kurtz D.B."/>
            <person name="Kwan A."/>
            <person name="Lam B."/>
            <person name="Langin-Hooper S."/>
            <person name="Lee A."/>
            <person name="Lee J.M."/>
            <person name="Lenz C.A."/>
            <person name="Li J.H."/>
            <person name="Li Y.-P."/>
            <person name="Lin X."/>
            <person name="Liu S.X."/>
            <person name="Liu Z.A."/>
            <person name="Luros J.S."/>
            <person name="Maiti R."/>
            <person name="Marziali A."/>
            <person name="Militscher J."/>
            <person name="Miranda M."/>
            <person name="Nguyen M."/>
            <person name="Nierman W.C."/>
            <person name="Osborne B.I."/>
            <person name="Pai G."/>
            <person name="Peterson J."/>
            <person name="Pham P.K."/>
            <person name="Rizzo M."/>
            <person name="Rooney T."/>
            <person name="Rowley D."/>
            <person name="Sakano H."/>
            <person name="Salzberg S.L."/>
            <person name="Schwartz J.R."/>
            <person name="Shinn P."/>
            <person name="Southwick A.M."/>
            <person name="Sun H."/>
            <person name="Tallon L.J."/>
            <person name="Tambunga G."/>
            <person name="Toriumi M.J."/>
            <person name="Town C.D."/>
            <person name="Utterback T."/>
            <person name="Van Aken S."/>
            <person name="Vaysberg M."/>
            <person name="Vysotskaia V.S."/>
            <person name="Walker M."/>
            <person name="Wu D."/>
            <person name="Yu G."/>
            <person name="Fraser C.M."/>
            <person name="Venter J.C."/>
            <person name="Davis R.W."/>
        </authorList>
    </citation>
    <scope>NUCLEOTIDE SEQUENCE [LARGE SCALE GENOMIC DNA]</scope>
    <source>
        <strain>cv. Columbia</strain>
    </source>
</reference>
<reference key="3">
    <citation type="journal article" date="2017" name="Plant J.">
        <title>Araport11: a complete reannotation of the Arabidopsis thaliana reference genome.</title>
        <authorList>
            <person name="Cheng C.Y."/>
            <person name="Krishnakumar V."/>
            <person name="Chan A.P."/>
            <person name="Thibaud-Nissen F."/>
            <person name="Schobel S."/>
            <person name="Town C.D."/>
        </authorList>
    </citation>
    <scope>GENOME REANNOTATION</scope>
    <source>
        <strain>cv. Columbia</strain>
    </source>
</reference>
<reference key="4">
    <citation type="submission" date="2006-07" db="EMBL/GenBank/DDBJ databases">
        <title>Large-scale analysis of RIKEN Arabidopsis full-length (RAFL) cDNAs.</title>
        <authorList>
            <person name="Totoki Y."/>
            <person name="Seki M."/>
            <person name="Ishida J."/>
            <person name="Nakajima M."/>
            <person name="Enju A."/>
            <person name="Kamiya A."/>
            <person name="Narusaka M."/>
            <person name="Shin-i T."/>
            <person name="Nakagawa M."/>
            <person name="Sakamoto N."/>
            <person name="Oishi K."/>
            <person name="Kohara Y."/>
            <person name="Kobayashi M."/>
            <person name="Toyoda A."/>
            <person name="Sakaki Y."/>
            <person name="Sakurai T."/>
            <person name="Iida K."/>
            <person name="Akiyama K."/>
            <person name="Satou M."/>
            <person name="Toyoda T."/>
            <person name="Konagaya A."/>
            <person name="Carninci P."/>
            <person name="Kawai J."/>
            <person name="Hayashizaki Y."/>
            <person name="Shinozaki K."/>
        </authorList>
    </citation>
    <scope>NUCLEOTIDE SEQUENCE [LARGE SCALE MRNA]</scope>
    <source>
        <strain>cv. Columbia</strain>
    </source>
</reference>
<reference key="5">
    <citation type="journal article" date="2002" name="Genome Biol.">
        <title>From genome to function: the Arabidopsis aquaporins.</title>
        <authorList>
            <person name="Quigley F."/>
            <person name="Rosenberg J.M."/>
            <person name="Shachar-Hill Y."/>
            <person name="Bohnert H.J."/>
        </authorList>
    </citation>
    <scope>NOMENCLATURE</scope>
    <scope>TISSUE SPECIFICITY</scope>
</reference>
<sequence length="267" mass="28183">MATSARRAYGFGRADEATHPDSIRATLAEFLSTFVFVFAGEGSILALDKLYWDTAAHTGTNTPGGLVLVALAHALALFAAVSAAINVSGGHVNPAVTFAALIGGRISVIRAIYYWVAQLIGAILACLLLRLATNGLRPVGFHVASGVSELHGLLMEIILTFALVYVVYSTAIDPKRGSIGIIAPLAIGLIVGANILVGGPFDGASMNPARAFGPALVGWRWSNHWIYWVGPFIGGALAALIYEYMIIPSVNEPPHHSTHQPLAPEDY</sequence>
<feature type="chain" id="PRO_0000425763" description="Probable aquaporin TIP3-2">
    <location>
        <begin position="1"/>
        <end position="267"/>
    </location>
</feature>
<feature type="initiator methionine" description="Removed; alternate" evidence="3">
    <location>
        <position position="1"/>
    </location>
</feature>
<feature type="chain" id="PRO_0000064015" description="Probable aquaporin TIP3-2, N-terminally processed">
    <location>
        <begin position="2"/>
        <end position="267"/>
    </location>
</feature>
<feature type="topological domain" description="Cytoplasmic" evidence="4">
    <location>
        <begin position="2"/>
        <end position="26"/>
    </location>
</feature>
<feature type="transmembrane region" description="Helical; Name=1" evidence="4">
    <location>
        <begin position="27"/>
        <end position="47"/>
    </location>
</feature>
<feature type="topological domain" description="Vacuolar" evidence="4">
    <location>
        <begin position="48"/>
        <end position="66"/>
    </location>
</feature>
<feature type="transmembrane region" description="Helical; Name=2" evidence="4">
    <location>
        <begin position="67"/>
        <end position="87"/>
    </location>
</feature>
<feature type="topological domain" description="Cytoplasmic" evidence="4">
    <location>
        <begin position="88"/>
        <end position="110"/>
    </location>
</feature>
<feature type="transmembrane region" description="Helical; Name=3" evidence="4">
    <location>
        <begin position="111"/>
        <end position="131"/>
    </location>
</feature>
<feature type="topological domain" description="Vacuolar" evidence="4">
    <location>
        <begin position="132"/>
        <end position="151"/>
    </location>
</feature>
<feature type="transmembrane region" description="Helical; Name=4" evidence="4">
    <location>
        <begin position="152"/>
        <end position="172"/>
    </location>
</feature>
<feature type="topological domain" description="Cytoplasmic" evidence="4">
    <location>
        <begin position="173"/>
        <end position="178"/>
    </location>
</feature>
<feature type="transmembrane region" description="Helical; Name=5" evidence="4">
    <location>
        <begin position="179"/>
        <end position="199"/>
    </location>
</feature>
<feature type="topological domain" description="Vacuolar" evidence="4">
    <location>
        <begin position="200"/>
        <end position="226"/>
    </location>
</feature>
<feature type="transmembrane region" description="Helical; Name=6" evidence="4">
    <location>
        <begin position="227"/>
        <end position="247"/>
    </location>
</feature>
<feature type="topological domain" description="Cytoplasmic" evidence="4">
    <location>
        <begin position="248"/>
        <end position="267"/>
    </location>
</feature>
<feature type="short sequence motif" description="NPA 1">
    <location>
        <begin position="93"/>
        <end position="95"/>
    </location>
</feature>
<feature type="short sequence motif" description="NPA 2">
    <location>
        <begin position="207"/>
        <end position="209"/>
    </location>
</feature>
<feature type="modified residue" description="N-acetylmethionine" evidence="2">
    <location>
        <position position="1"/>
    </location>
</feature>
<feature type="modified residue" description="N-acetylalanine; in Probable aquaporin TIP3-2, N-terminally processed" evidence="3">
    <location>
        <position position="2"/>
    </location>
</feature>
<comment type="function">
    <text evidence="1">Aquaporins facilitate the transport of water and small neutral solutes across cell membranes.</text>
</comment>
<comment type="subcellular location">
    <subcellularLocation>
        <location evidence="1">Vacuole membrane</location>
        <topology evidence="1">Multi-pass membrane protein</topology>
    </subcellularLocation>
    <text>Tonoplast.</text>
</comment>
<comment type="alternative products">
    <event type="alternative splicing"/>
    <isoform>
        <id>O22588-1</id>
        <name>1</name>
        <sequence type="displayed"/>
    </isoform>
    <text>A number of isoforms are produced. According to EST sequences.</text>
</comment>
<comment type="tissue specificity">
    <text evidence="5">Predominantly expressed in developing seeds. Also expressed in rosette leaves.</text>
</comment>
<comment type="domain">
    <text>Aquaporins contain two tandem repeats each containing three membrane-spanning domains and a pore-forming loop with the signature motif Asn-Pro-Ala (NPA).</text>
</comment>
<comment type="similarity">
    <text evidence="6">Belongs to the MIP/aquaporin (TC 1.A.8) family. TIP (TC 1.A.8.10) subfamily.</text>
</comment>